<comment type="function">
    <text evidence="1">Catalyzes the hydrolysis of glutamine to glutamate and ammonia as part of the biosynthesis of pyridoxal 5'-phosphate. The resulting ammonia molecule is channeled to the active site of PdxS.</text>
</comment>
<comment type="catalytic activity">
    <reaction evidence="1">
        <text>aldehydo-D-ribose 5-phosphate + D-glyceraldehyde 3-phosphate + L-glutamine = pyridoxal 5'-phosphate + L-glutamate + phosphate + 3 H2O + H(+)</text>
        <dbReference type="Rhea" id="RHEA:31507"/>
        <dbReference type="ChEBI" id="CHEBI:15377"/>
        <dbReference type="ChEBI" id="CHEBI:15378"/>
        <dbReference type="ChEBI" id="CHEBI:29985"/>
        <dbReference type="ChEBI" id="CHEBI:43474"/>
        <dbReference type="ChEBI" id="CHEBI:58273"/>
        <dbReference type="ChEBI" id="CHEBI:58359"/>
        <dbReference type="ChEBI" id="CHEBI:59776"/>
        <dbReference type="ChEBI" id="CHEBI:597326"/>
        <dbReference type="EC" id="4.3.3.6"/>
    </reaction>
</comment>
<comment type="catalytic activity">
    <reaction evidence="1">
        <text>L-glutamine + H2O = L-glutamate + NH4(+)</text>
        <dbReference type="Rhea" id="RHEA:15889"/>
        <dbReference type="ChEBI" id="CHEBI:15377"/>
        <dbReference type="ChEBI" id="CHEBI:28938"/>
        <dbReference type="ChEBI" id="CHEBI:29985"/>
        <dbReference type="ChEBI" id="CHEBI:58359"/>
        <dbReference type="EC" id="3.5.1.2"/>
    </reaction>
</comment>
<comment type="pathway">
    <text evidence="1">Cofactor biosynthesis; pyridoxal 5'-phosphate biosynthesis.</text>
</comment>
<comment type="subunit">
    <text evidence="1">In the presence of PdxS, forms a dodecamer of heterodimers. Only shows activity in the heterodimer.</text>
</comment>
<comment type="similarity">
    <text evidence="1">Belongs to the glutaminase PdxT/SNO family.</text>
</comment>
<reference key="1">
    <citation type="journal article" date="2004" name="Proc. Natl. Acad. Sci. U.S.A.">
        <title>Complete genomes of two clinical Staphylococcus aureus strains: evidence for the rapid evolution of virulence and drug resistance.</title>
        <authorList>
            <person name="Holden M.T.G."/>
            <person name="Feil E.J."/>
            <person name="Lindsay J.A."/>
            <person name="Peacock S.J."/>
            <person name="Day N.P.J."/>
            <person name="Enright M.C."/>
            <person name="Foster T.J."/>
            <person name="Moore C.E."/>
            <person name="Hurst L."/>
            <person name="Atkin R."/>
            <person name="Barron A."/>
            <person name="Bason N."/>
            <person name="Bentley S.D."/>
            <person name="Chillingworth C."/>
            <person name="Chillingworth T."/>
            <person name="Churcher C."/>
            <person name="Clark L."/>
            <person name="Corton C."/>
            <person name="Cronin A."/>
            <person name="Doggett J."/>
            <person name="Dowd L."/>
            <person name="Feltwell T."/>
            <person name="Hance Z."/>
            <person name="Harris B."/>
            <person name="Hauser H."/>
            <person name="Holroyd S."/>
            <person name="Jagels K."/>
            <person name="James K.D."/>
            <person name="Lennard N."/>
            <person name="Line A."/>
            <person name="Mayes R."/>
            <person name="Moule S."/>
            <person name="Mungall K."/>
            <person name="Ormond D."/>
            <person name="Quail M.A."/>
            <person name="Rabbinowitsch E."/>
            <person name="Rutherford K.M."/>
            <person name="Sanders M."/>
            <person name="Sharp S."/>
            <person name="Simmonds M."/>
            <person name="Stevens K."/>
            <person name="Whitehead S."/>
            <person name="Barrell B.G."/>
            <person name="Spratt B.G."/>
            <person name="Parkhill J."/>
        </authorList>
    </citation>
    <scope>NUCLEOTIDE SEQUENCE [LARGE SCALE GENOMIC DNA]</scope>
    <source>
        <strain>MSSA476</strain>
    </source>
</reference>
<accession>Q6GBW8</accession>
<gene>
    <name evidence="1" type="primary">pdxT</name>
    <name type="ordered locus">SAS0477</name>
</gene>
<organism>
    <name type="scientific">Staphylococcus aureus (strain MSSA476)</name>
    <dbReference type="NCBI Taxonomy" id="282459"/>
    <lineage>
        <taxon>Bacteria</taxon>
        <taxon>Bacillati</taxon>
        <taxon>Bacillota</taxon>
        <taxon>Bacilli</taxon>
        <taxon>Bacillales</taxon>
        <taxon>Staphylococcaceae</taxon>
        <taxon>Staphylococcus</taxon>
    </lineage>
</organism>
<proteinExistence type="inferred from homology"/>
<evidence type="ECO:0000255" key="1">
    <source>
        <dbReference type="HAMAP-Rule" id="MF_01615"/>
    </source>
</evidence>
<protein>
    <recommendedName>
        <fullName evidence="1">Pyridoxal 5'-phosphate synthase subunit PdxT</fullName>
        <ecNumber evidence="1">4.3.3.6</ecNumber>
    </recommendedName>
    <alternativeName>
        <fullName evidence="1">Pdx2</fullName>
    </alternativeName>
    <alternativeName>
        <fullName evidence="1">Pyridoxal 5'-phosphate synthase glutaminase subunit</fullName>
        <ecNumber evidence="1">3.5.1.2</ecNumber>
    </alternativeName>
</protein>
<keyword id="KW-0315">Glutamine amidotransferase</keyword>
<keyword id="KW-0378">Hydrolase</keyword>
<keyword id="KW-0456">Lyase</keyword>
<keyword id="KW-0663">Pyridoxal phosphate</keyword>
<feature type="chain" id="PRO_0000135659" description="Pyridoxal 5'-phosphate synthase subunit PdxT">
    <location>
        <begin position="1"/>
        <end position="186"/>
    </location>
</feature>
<feature type="active site" description="Nucleophile" evidence="1">
    <location>
        <position position="75"/>
    </location>
</feature>
<feature type="active site" description="Charge relay system" evidence="1">
    <location>
        <position position="165"/>
    </location>
</feature>
<feature type="active site" description="Charge relay system" evidence="1">
    <location>
        <position position="167"/>
    </location>
</feature>
<feature type="binding site" evidence="1">
    <location>
        <begin position="46"/>
        <end position="48"/>
    </location>
    <ligand>
        <name>L-glutamine</name>
        <dbReference type="ChEBI" id="CHEBI:58359"/>
    </ligand>
</feature>
<feature type="binding site" evidence="1">
    <location>
        <position position="101"/>
    </location>
    <ligand>
        <name>L-glutamine</name>
        <dbReference type="ChEBI" id="CHEBI:58359"/>
    </ligand>
</feature>
<feature type="binding site" evidence="1">
    <location>
        <begin position="129"/>
        <end position="130"/>
    </location>
    <ligand>
        <name>L-glutamine</name>
        <dbReference type="ChEBI" id="CHEBI:58359"/>
    </ligand>
</feature>
<dbReference type="EC" id="4.3.3.6" evidence="1"/>
<dbReference type="EC" id="3.5.1.2" evidence="1"/>
<dbReference type="EMBL" id="BX571857">
    <property type="protein sequence ID" value="CAG42252.1"/>
    <property type="molecule type" value="Genomic_DNA"/>
</dbReference>
<dbReference type="RefSeq" id="WP_000690439.1">
    <property type="nucleotide sequence ID" value="NC_002953.3"/>
</dbReference>
<dbReference type="SMR" id="Q6GBW8"/>
<dbReference type="KEGG" id="sas:SAS0477"/>
<dbReference type="HOGENOM" id="CLU_069674_2_0_9"/>
<dbReference type="UniPathway" id="UPA00245"/>
<dbReference type="GO" id="GO:0005829">
    <property type="term" value="C:cytosol"/>
    <property type="evidence" value="ECO:0007669"/>
    <property type="project" value="TreeGrafter"/>
</dbReference>
<dbReference type="GO" id="GO:1903600">
    <property type="term" value="C:glutaminase complex"/>
    <property type="evidence" value="ECO:0007669"/>
    <property type="project" value="TreeGrafter"/>
</dbReference>
<dbReference type="GO" id="GO:0004359">
    <property type="term" value="F:glutaminase activity"/>
    <property type="evidence" value="ECO:0007669"/>
    <property type="project" value="UniProtKB-UniRule"/>
</dbReference>
<dbReference type="GO" id="GO:0036381">
    <property type="term" value="F:pyridoxal 5'-phosphate synthase (glutamine hydrolysing) activity"/>
    <property type="evidence" value="ECO:0007669"/>
    <property type="project" value="UniProtKB-UniRule"/>
</dbReference>
<dbReference type="GO" id="GO:0006543">
    <property type="term" value="P:glutamine catabolic process"/>
    <property type="evidence" value="ECO:0007669"/>
    <property type="project" value="UniProtKB-UniRule"/>
</dbReference>
<dbReference type="GO" id="GO:0042823">
    <property type="term" value="P:pyridoxal phosphate biosynthetic process"/>
    <property type="evidence" value="ECO:0007669"/>
    <property type="project" value="UniProtKB-UniRule"/>
</dbReference>
<dbReference type="GO" id="GO:0008614">
    <property type="term" value="P:pyridoxine metabolic process"/>
    <property type="evidence" value="ECO:0007669"/>
    <property type="project" value="TreeGrafter"/>
</dbReference>
<dbReference type="CDD" id="cd01749">
    <property type="entry name" value="GATase1_PB"/>
    <property type="match status" value="1"/>
</dbReference>
<dbReference type="FunFam" id="3.40.50.880:FF:000010">
    <property type="entry name" value="uncharacterized protein LOC100176842 isoform X2"/>
    <property type="match status" value="1"/>
</dbReference>
<dbReference type="Gene3D" id="3.40.50.880">
    <property type="match status" value="1"/>
</dbReference>
<dbReference type="HAMAP" id="MF_01615">
    <property type="entry name" value="PdxT"/>
    <property type="match status" value="1"/>
</dbReference>
<dbReference type="InterPro" id="IPR029062">
    <property type="entry name" value="Class_I_gatase-like"/>
</dbReference>
<dbReference type="InterPro" id="IPR002161">
    <property type="entry name" value="PdxT/SNO"/>
</dbReference>
<dbReference type="InterPro" id="IPR021196">
    <property type="entry name" value="PdxT/SNO_CS"/>
</dbReference>
<dbReference type="NCBIfam" id="TIGR03800">
    <property type="entry name" value="PLP_synth_Pdx2"/>
    <property type="match status" value="1"/>
</dbReference>
<dbReference type="PANTHER" id="PTHR31559">
    <property type="entry name" value="PYRIDOXAL 5'-PHOSPHATE SYNTHASE SUBUNIT SNO"/>
    <property type="match status" value="1"/>
</dbReference>
<dbReference type="PANTHER" id="PTHR31559:SF0">
    <property type="entry name" value="PYRIDOXAL 5'-PHOSPHATE SYNTHASE SUBUNIT SNO1-RELATED"/>
    <property type="match status" value="1"/>
</dbReference>
<dbReference type="Pfam" id="PF01174">
    <property type="entry name" value="SNO"/>
    <property type="match status" value="1"/>
</dbReference>
<dbReference type="PIRSF" id="PIRSF005639">
    <property type="entry name" value="Glut_amidoT_SNO"/>
    <property type="match status" value="1"/>
</dbReference>
<dbReference type="SUPFAM" id="SSF52317">
    <property type="entry name" value="Class I glutamine amidotransferase-like"/>
    <property type="match status" value="1"/>
</dbReference>
<dbReference type="PROSITE" id="PS01236">
    <property type="entry name" value="PDXT_SNO_1"/>
    <property type="match status" value="1"/>
</dbReference>
<dbReference type="PROSITE" id="PS51130">
    <property type="entry name" value="PDXT_SNO_2"/>
    <property type="match status" value="1"/>
</dbReference>
<name>PDXT_STAAS</name>
<sequence length="186" mass="20630">MKIGVLALQGAVREHIRHIELSGHEGIAVKKVEQLEEIEGLILPGGESTTLRRLMNLYGFKEALQNSTLPMFGTCAGLIVLAQDIVGEEGYLNKLNITVQRNSFGRQVDSFETELDIKGIATDIEGVFIRAPHIEKVGQGVDILCKVNEKIVAVQQGKYLGVSFHPELTDDYRVTDYFINHIVKKA</sequence>